<sequence length="523" mass="59186">MSVRPFESPPPYRPDEFKPNHYAPSNDMYGGEMHVRPMLSQPAYSFYPEDEILHFYKWTSPPGVIRILSMLVIVMCIAVFACVASTLAWDRAYGTGIFGGSMNYPYGSGFGSYGGGFGGYGYGYGYGYGGYTDPRAAKGFLLAMAAFCFIASLVIFVTSVIRSGMSRTRRYYLIVIIVSAILGIMVFIATIVYIMGVNPTAQASGSMYGSQIYTICSQFYTPGGTGLYVDQYLYHYCVVDPQEAIAIVLGFMIIVAFALIIVFAVKTRRKMDRYDKSNILWDKEHIYDEQPPNVEEWVKNVSAGTQDMPPPPSDYAERVDSPMAYSSNGKVNGKRSYPDSLYKSPPLVPEVAQEIPLTLSVDDFRQPRYSSNDNLETPSKRTPTKGKAGKAKRTDPDHYETDYTTGGESCDELEEDWLREYPPITSDQQRQLYKRNFDAGLQEYKSLLAELDEVNKELSRLDRELDDYREESEEYMAAADEYNRLKQVKGSADYKSKKNYCKQLKSKLSHIKRMVGDYDRRKT</sequence>
<protein>
    <recommendedName>
        <fullName>Occludin</fullName>
    </recommendedName>
</protein>
<reference key="1">
    <citation type="journal article" date="1999" name="Med. Electron Microsc.">
        <title>Occludin modulates organization of perijunctional circumferential actin in rat endothelial cells.</title>
        <authorList>
            <person name="Atsumi Si S."/>
            <person name="Kokai Y."/>
            <person name="Tobioka H."/>
            <person name="Kuwahara K."/>
            <person name="Kuwabara H."/>
            <person name="Takakuwa Y."/>
            <person name="Sasaki Ki K."/>
            <person name="Sawada N."/>
            <person name="Mitaka T."/>
            <person name="Mochizuki Y."/>
            <person name="Imai K."/>
            <person name="Mori M."/>
        </authorList>
    </citation>
    <scope>NUCLEOTIDE SEQUENCE [MRNA]</scope>
    <scope>FUNCTION</scope>
    <source>
        <strain>Sprague-Dawley</strain>
        <tissue>Liver</tissue>
    </source>
</reference>
<reference key="2">
    <citation type="journal article" date="2004" name="Genome Res.">
        <title>The status, quality, and expansion of the NIH full-length cDNA project: the Mammalian Gene Collection (MGC).</title>
        <authorList>
            <consortium name="The MGC Project Team"/>
        </authorList>
    </citation>
    <scope>NUCLEOTIDE SEQUENCE [LARGE SCALE MRNA]</scope>
    <source>
        <tissue>Prostate</tissue>
    </source>
</reference>
<reference key="3">
    <citation type="journal article" date="2012" name="Nat. Commun.">
        <title>Quantitative maps of protein phosphorylation sites across 14 different rat organs and tissues.</title>
        <authorList>
            <person name="Lundby A."/>
            <person name="Secher A."/>
            <person name="Lage K."/>
            <person name="Nordsborg N.B."/>
            <person name="Dmytriyev A."/>
            <person name="Lundby C."/>
            <person name="Olsen J.V."/>
        </authorList>
    </citation>
    <scope>PHOSPHORYLATION [LARGE SCALE ANALYSIS] AT SER-371</scope>
    <scope>IDENTIFICATION BY MASS SPECTROMETRY [LARGE SCALE ANALYSIS]</scope>
</reference>
<proteinExistence type="evidence at protein level"/>
<evidence type="ECO:0000250" key="1"/>
<evidence type="ECO:0000250" key="2">
    <source>
        <dbReference type="UniProtKB" id="Q16625"/>
    </source>
</evidence>
<evidence type="ECO:0000250" key="3">
    <source>
        <dbReference type="UniProtKB" id="Q61146"/>
    </source>
</evidence>
<evidence type="ECO:0000255" key="4"/>
<evidence type="ECO:0000255" key="5">
    <source>
        <dbReference type="PROSITE-ProRule" id="PRU00114"/>
    </source>
</evidence>
<evidence type="ECO:0000255" key="6">
    <source>
        <dbReference type="PROSITE-ProRule" id="PRU00581"/>
    </source>
</evidence>
<evidence type="ECO:0000255" key="7">
    <source>
        <dbReference type="PROSITE-ProRule" id="PRU01324"/>
    </source>
</evidence>
<evidence type="ECO:0000256" key="8">
    <source>
        <dbReference type="SAM" id="MobiDB-lite"/>
    </source>
</evidence>
<evidence type="ECO:0000269" key="9">
    <source>
    </source>
</evidence>
<evidence type="ECO:0000305" key="10"/>
<evidence type="ECO:0007744" key="11">
    <source>
    </source>
</evidence>
<comment type="function">
    <text evidence="9">May play a role in the formation and regulation of the tight junction (TJ) paracellular permeability barrier. May be involved in the organization of actin in endothelial cells.</text>
</comment>
<comment type="subunit">
    <text evidence="2 3">Interacts with TJP1/ZO1. Interacts with VAPA. Interacts with CLDN1, CLDN6, CLDN9, CLDN11, CLDN12 and CLDN17. Interacts with PLSCR1. Interacts with LSR, ILDR1 and ILDR2. Interacts with TJP2/ZO2 (By similarity).</text>
</comment>
<comment type="interaction">
    <interactant intactId="EBI-15348891">
        <id>Q6P6T5</id>
    </interactant>
    <interactant intactId="EBI-6252940">
        <id>O35346</id>
        <label>Ptk2</label>
    </interactant>
    <organismsDiffer>false</organismsDiffer>
    <experiments>2</experiments>
</comment>
<comment type="interaction">
    <interactant intactId="EBI-15348891">
        <id>Q6P6T5</id>
    </interactant>
    <interactant intactId="EBI-15783773">
        <id>F1M4A0</id>
        <label>Tjp1</label>
    </interactant>
    <organismsDiffer>false</organismsDiffer>
    <experiments>2</experiments>
</comment>
<comment type="subcellular location">
    <subcellularLocation>
        <location evidence="2">Cell membrane</location>
        <topology evidence="4">Multi-pass membrane protein</topology>
    </subcellularLocation>
    <subcellularLocation>
        <location evidence="2">Cell junction</location>
        <location evidence="2">Tight junction</location>
    </subcellularLocation>
</comment>
<comment type="domain">
    <text evidence="1">The C-terminal is cytoplasmic and is important for interaction with ZO-1. Sufficient for the tight junction localization. Involved in the regulation of the permeability barrier function of the tight junction (By similarity).</text>
</comment>
<comment type="PTM">
    <text evidence="1">Dephosphorylated by PTPRJ.</text>
</comment>
<comment type="similarity">
    <text evidence="10">Belongs to the ELL/occludin family.</text>
</comment>
<accession>Q6P6T5</accession>
<accession>Q9Z303</accession>
<feature type="chain" id="PRO_0000236103" description="Occludin">
    <location>
        <begin position="1"/>
        <end position="523"/>
    </location>
</feature>
<feature type="topological domain" description="Cytoplasmic" evidence="4">
    <location>
        <begin position="1"/>
        <end position="66"/>
    </location>
</feature>
<feature type="transmembrane region" description="Helical" evidence="4">
    <location>
        <begin position="67"/>
        <end position="87"/>
    </location>
</feature>
<feature type="topological domain" description="Extracellular" evidence="4">
    <location>
        <begin position="88"/>
        <end position="140"/>
    </location>
</feature>
<feature type="transmembrane region" description="Helical" evidence="4">
    <location>
        <begin position="141"/>
        <end position="161"/>
    </location>
</feature>
<feature type="topological domain" description="Cytoplasmic" evidence="4">
    <location>
        <begin position="162"/>
        <end position="173"/>
    </location>
</feature>
<feature type="transmembrane region" description="Helical" evidence="4">
    <location>
        <begin position="174"/>
        <end position="194"/>
    </location>
</feature>
<feature type="topological domain" description="Extracellular" evidence="4">
    <location>
        <begin position="195"/>
        <end position="244"/>
    </location>
</feature>
<feature type="transmembrane region" description="Helical" evidence="4">
    <location>
        <begin position="245"/>
        <end position="265"/>
    </location>
</feature>
<feature type="topological domain" description="Cytoplasmic" evidence="4">
    <location>
        <begin position="266"/>
        <end position="523"/>
    </location>
</feature>
<feature type="domain" description="MARVEL" evidence="6">
    <location>
        <begin position="60"/>
        <end position="269"/>
    </location>
</feature>
<feature type="domain" description="OCEL" evidence="7">
    <location>
        <begin position="415"/>
        <end position="523"/>
    </location>
</feature>
<feature type="region of interest" description="Disordered" evidence="8">
    <location>
        <begin position="1"/>
        <end position="20"/>
    </location>
</feature>
<feature type="region of interest" description="Disordered" evidence="8">
    <location>
        <begin position="302"/>
        <end position="338"/>
    </location>
</feature>
<feature type="region of interest" description="Disordered" evidence="8">
    <location>
        <begin position="363"/>
        <end position="408"/>
    </location>
</feature>
<feature type="coiled-coil region" evidence="4">
    <location>
        <begin position="433"/>
        <end position="489"/>
    </location>
</feature>
<feature type="compositionally biased region" description="Polar residues" evidence="8">
    <location>
        <begin position="368"/>
        <end position="381"/>
    </location>
</feature>
<feature type="compositionally biased region" description="Basic residues" evidence="8">
    <location>
        <begin position="382"/>
        <end position="391"/>
    </location>
</feature>
<feature type="compositionally biased region" description="Basic and acidic residues" evidence="8">
    <location>
        <begin position="392"/>
        <end position="401"/>
    </location>
</feature>
<feature type="modified residue" description="Phosphoserine" evidence="3">
    <location>
        <position position="302"/>
    </location>
</feature>
<feature type="modified residue" description="Phosphothreonine" evidence="3">
    <location>
        <position position="305"/>
    </location>
</feature>
<feature type="modified residue" description="Phosphoserine" evidence="2">
    <location>
        <position position="313"/>
    </location>
</feature>
<feature type="modified residue" description="Phosphoserine" evidence="2">
    <location>
        <position position="321"/>
    </location>
</feature>
<feature type="modified residue" description="Phosphoserine" evidence="3">
    <location>
        <position position="340"/>
    </location>
</feature>
<feature type="modified residue" description="Phosphoserine" evidence="3">
    <location>
        <position position="360"/>
    </location>
</feature>
<feature type="modified residue" description="Phosphotyrosine" evidence="2">
    <location>
        <position position="369"/>
    </location>
</feature>
<feature type="modified residue" description="Phosphoserine" evidence="2">
    <location>
        <position position="370"/>
    </location>
</feature>
<feature type="modified residue" description="Phosphoserine" evidence="11">
    <location>
        <position position="371"/>
    </location>
</feature>
<feature type="modified residue" description="Phosphotyrosine" evidence="2">
    <location>
        <position position="399"/>
    </location>
</feature>
<feature type="modified residue" description="Phosphotyrosine" evidence="2">
    <location>
        <position position="403"/>
    </location>
</feature>
<feature type="modified residue" description="Phosphothreonine; by PKC/PRKCH" evidence="2">
    <location>
        <position position="404"/>
    </location>
</feature>
<feature type="modified residue" description="Phosphothreonine; by PKC/PRKCH" evidence="2">
    <location>
        <position position="405"/>
    </location>
</feature>
<feature type="modified residue" description="Phosphoserine" evidence="2">
    <location>
        <position position="409"/>
    </location>
</feature>
<feature type="modified residue" description="Phosphoserine" evidence="2">
    <location>
        <position position="491"/>
    </location>
</feature>
<feature type="disulfide bond" evidence="5">
    <location>
        <begin position="216"/>
        <end position="237"/>
    </location>
</feature>
<feature type="sequence conflict" description="In Ref. 1; BAA36681." evidence="10" ref="1">
    <original>K</original>
    <variation>R</variation>
    <location>
        <position position="276"/>
    </location>
</feature>
<name>OCLN_RAT</name>
<keyword id="KW-0965">Cell junction</keyword>
<keyword id="KW-1003">Cell membrane</keyword>
<keyword id="KW-0175">Coiled coil</keyword>
<keyword id="KW-1015">Disulfide bond</keyword>
<keyword id="KW-0472">Membrane</keyword>
<keyword id="KW-0597">Phosphoprotein</keyword>
<keyword id="KW-1185">Reference proteome</keyword>
<keyword id="KW-0796">Tight junction</keyword>
<keyword id="KW-0812">Transmembrane</keyword>
<keyword id="KW-1133">Transmembrane helix</keyword>
<organism>
    <name type="scientific">Rattus norvegicus</name>
    <name type="common">Rat</name>
    <dbReference type="NCBI Taxonomy" id="10116"/>
    <lineage>
        <taxon>Eukaryota</taxon>
        <taxon>Metazoa</taxon>
        <taxon>Chordata</taxon>
        <taxon>Craniata</taxon>
        <taxon>Vertebrata</taxon>
        <taxon>Euteleostomi</taxon>
        <taxon>Mammalia</taxon>
        <taxon>Eutheria</taxon>
        <taxon>Euarchontoglires</taxon>
        <taxon>Glires</taxon>
        <taxon>Rodentia</taxon>
        <taxon>Myomorpha</taxon>
        <taxon>Muroidea</taxon>
        <taxon>Muridae</taxon>
        <taxon>Murinae</taxon>
        <taxon>Rattus</taxon>
    </lineage>
</organism>
<gene>
    <name type="primary">Ocln</name>
</gene>
<dbReference type="EMBL" id="AB016425">
    <property type="protein sequence ID" value="BAA36681.1"/>
    <property type="molecule type" value="mRNA"/>
</dbReference>
<dbReference type="EMBL" id="BC062037">
    <property type="protein sequence ID" value="AAH62037.1"/>
    <property type="molecule type" value="mRNA"/>
</dbReference>
<dbReference type="RefSeq" id="NP_112619.2">
    <property type="nucleotide sequence ID" value="NM_031329.2"/>
</dbReference>
<dbReference type="RefSeq" id="XP_006231915.1">
    <property type="nucleotide sequence ID" value="XM_006231853.5"/>
</dbReference>
<dbReference type="RefSeq" id="XP_006231916.1">
    <property type="nucleotide sequence ID" value="XM_006231854.5"/>
</dbReference>
<dbReference type="RefSeq" id="XP_006231917.1">
    <property type="nucleotide sequence ID" value="XM_006231855.5"/>
</dbReference>
<dbReference type="RefSeq" id="XP_038959170.1">
    <property type="nucleotide sequence ID" value="XM_039103242.2"/>
</dbReference>
<dbReference type="RefSeq" id="XP_038959172.1">
    <property type="nucleotide sequence ID" value="XM_039103244.2"/>
</dbReference>
<dbReference type="RefSeq" id="XP_063138706.1">
    <property type="nucleotide sequence ID" value="XM_063282636.1"/>
</dbReference>
<dbReference type="SMR" id="Q6P6T5"/>
<dbReference type="BioGRID" id="249716">
    <property type="interactions" value="2"/>
</dbReference>
<dbReference type="CORUM" id="Q6P6T5"/>
<dbReference type="DIP" id="DIP-48891N"/>
<dbReference type="FunCoup" id="Q6P6T5">
    <property type="interactions" value="827"/>
</dbReference>
<dbReference type="IntAct" id="Q6P6T5">
    <property type="interactions" value="2"/>
</dbReference>
<dbReference type="STRING" id="10116.ENSRNOP00000024674"/>
<dbReference type="iPTMnet" id="Q6P6T5"/>
<dbReference type="PhosphoSitePlus" id="Q6P6T5"/>
<dbReference type="PaxDb" id="10116-ENSRNOP00000024674"/>
<dbReference type="Ensembl" id="ENSRNOT00000024674.6">
    <property type="protein sequence ID" value="ENSRNOP00000024674.4"/>
    <property type="gene ID" value="ENSRNOG00000018297.6"/>
</dbReference>
<dbReference type="GeneID" id="83497"/>
<dbReference type="KEGG" id="rno:83497"/>
<dbReference type="AGR" id="RGD:620089"/>
<dbReference type="CTD" id="100506658"/>
<dbReference type="RGD" id="620089">
    <property type="gene designation" value="Ocln"/>
</dbReference>
<dbReference type="eggNOG" id="ENOG502QS9F">
    <property type="taxonomic scope" value="Eukaryota"/>
</dbReference>
<dbReference type="GeneTree" id="ENSGT00940000155771"/>
<dbReference type="HOGENOM" id="CLU_039628_1_0_1"/>
<dbReference type="InParanoid" id="Q6P6T5"/>
<dbReference type="TreeFam" id="TF326161"/>
<dbReference type="Reactome" id="R-RNO-351906">
    <property type="pathway name" value="Apoptotic cleavage of cell adhesion proteins"/>
</dbReference>
<dbReference type="PRO" id="PR:Q6P6T5"/>
<dbReference type="Proteomes" id="UP000002494">
    <property type="component" value="Chromosome 2"/>
</dbReference>
<dbReference type="Bgee" id="ENSRNOG00000018297">
    <property type="expression patterns" value="Expressed in jejunum and 18 other cell types or tissues"/>
</dbReference>
<dbReference type="GO" id="GO:0016324">
    <property type="term" value="C:apical plasma membrane"/>
    <property type="evidence" value="ECO:0000314"/>
    <property type="project" value="RGD"/>
</dbReference>
<dbReference type="GO" id="GO:0016327">
    <property type="term" value="C:apicolateral plasma membrane"/>
    <property type="evidence" value="ECO:0000266"/>
    <property type="project" value="RGD"/>
</dbReference>
<dbReference type="GO" id="GO:0005923">
    <property type="term" value="C:bicellular tight junction"/>
    <property type="evidence" value="ECO:0000266"/>
    <property type="project" value="RGD"/>
</dbReference>
<dbReference type="GO" id="GO:0030054">
    <property type="term" value="C:cell junction"/>
    <property type="evidence" value="ECO:0000266"/>
    <property type="project" value="RGD"/>
</dbReference>
<dbReference type="GO" id="GO:0031252">
    <property type="term" value="C:cell leading edge"/>
    <property type="evidence" value="ECO:0000266"/>
    <property type="project" value="RGD"/>
</dbReference>
<dbReference type="GO" id="GO:0009986">
    <property type="term" value="C:cell surface"/>
    <property type="evidence" value="ECO:0000266"/>
    <property type="project" value="RGD"/>
</dbReference>
<dbReference type="GO" id="GO:0005911">
    <property type="term" value="C:cell-cell junction"/>
    <property type="evidence" value="ECO:0000266"/>
    <property type="project" value="RGD"/>
</dbReference>
<dbReference type="GO" id="GO:0031410">
    <property type="term" value="C:cytoplasmic vesicle"/>
    <property type="evidence" value="ECO:0000266"/>
    <property type="project" value="RGD"/>
</dbReference>
<dbReference type="GO" id="GO:0030139">
    <property type="term" value="C:endocytic vesicle"/>
    <property type="evidence" value="ECO:0000266"/>
    <property type="project" value="RGD"/>
</dbReference>
<dbReference type="GO" id="GO:0016328">
    <property type="term" value="C:lateral plasma membrane"/>
    <property type="evidence" value="ECO:0000314"/>
    <property type="project" value="RGD"/>
</dbReference>
<dbReference type="GO" id="GO:0005765">
    <property type="term" value="C:lysosomal membrane"/>
    <property type="evidence" value="ECO:0000266"/>
    <property type="project" value="RGD"/>
</dbReference>
<dbReference type="GO" id="GO:0005886">
    <property type="term" value="C:plasma membrane"/>
    <property type="evidence" value="ECO:0000266"/>
    <property type="project" value="RGD"/>
</dbReference>
<dbReference type="GO" id="GO:0032991">
    <property type="term" value="C:protein-containing complex"/>
    <property type="evidence" value="ECO:0000266"/>
    <property type="project" value="RGD"/>
</dbReference>
<dbReference type="GO" id="GO:0070160">
    <property type="term" value="C:tight junction"/>
    <property type="evidence" value="ECO:0000266"/>
    <property type="project" value="RGD"/>
</dbReference>
<dbReference type="GO" id="GO:0019904">
    <property type="term" value="F:protein domain specific binding"/>
    <property type="evidence" value="ECO:0000266"/>
    <property type="project" value="RGD"/>
</dbReference>
<dbReference type="GO" id="GO:0070830">
    <property type="term" value="P:bicellular tight junction assembly"/>
    <property type="evidence" value="ECO:0000266"/>
    <property type="project" value="RGD"/>
</dbReference>
<dbReference type="GO" id="GO:0045216">
    <property type="term" value="P:cell-cell junction organization"/>
    <property type="evidence" value="ECO:0000266"/>
    <property type="project" value="RGD"/>
</dbReference>
<dbReference type="GO" id="GO:0071356">
    <property type="term" value="P:cellular response to tumor necrosis factor"/>
    <property type="evidence" value="ECO:0000270"/>
    <property type="project" value="RGD"/>
</dbReference>
<dbReference type="GO" id="GO:0010629">
    <property type="term" value="P:negative regulation of gene expression"/>
    <property type="evidence" value="ECO:0000266"/>
    <property type="project" value="RGD"/>
</dbReference>
<dbReference type="GO" id="GO:1905605">
    <property type="term" value="P:positive regulation of blood-brain barrier permeability"/>
    <property type="evidence" value="ECO:0000266"/>
    <property type="project" value="RGD"/>
</dbReference>
<dbReference type="GO" id="GO:0046326">
    <property type="term" value="P:positive regulation of D-glucose import"/>
    <property type="evidence" value="ECO:0000266"/>
    <property type="project" value="RGD"/>
</dbReference>
<dbReference type="GO" id="GO:0010628">
    <property type="term" value="P:positive regulation of gene expression"/>
    <property type="evidence" value="ECO:0000266"/>
    <property type="project" value="RGD"/>
</dbReference>
<dbReference type="GO" id="GO:0010592">
    <property type="term" value="P:positive regulation of lamellipodium assembly"/>
    <property type="evidence" value="ECO:0000266"/>
    <property type="project" value="RGD"/>
</dbReference>
<dbReference type="GO" id="GO:0031116">
    <property type="term" value="P:positive regulation of microtubule polymerization"/>
    <property type="evidence" value="ECO:0000266"/>
    <property type="project" value="RGD"/>
</dbReference>
<dbReference type="GO" id="GO:0090303">
    <property type="term" value="P:positive regulation of wound healing"/>
    <property type="evidence" value="ECO:0000266"/>
    <property type="project" value="RGD"/>
</dbReference>
<dbReference type="GO" id="GO:0010827">
    <property type="term" value="P:regulation of D-glucose transmembrane transport"/>
    <property type="evidence" value="ECO:0000266"/>
    <property type="project" value="RGD"/>
</dbReference>
<dbReference type="GO" id="GO:0045471">
    <property type="term" value="P:response to ethanol"/>
    <property type="evidence" value="ECO:0000270"/>
    <property type="project" value="RGD"/>
</dbReference>
<dbReference type="GO" id="GO:0140459">
    <property type="term" value="P:response to Gram-positive bacterium"/>
    <property type="evidence" value="ECO:0000270"/>
    <property type="project" value="RGD"/>
</dbReference>
<dbReference type="GO" id="GO:0070673">
    <property type="term" value="P:response to interleukin-18"/>
    <property type="evidence" value="ECO:0000315"/>
    <property type="project" value="RGD"/>
</dbReference>
<dbReference type="GO" id="GO:0120193">
    <property type="term" value="P:tight junction organization"/>
    <property type="evidence" value="ECO:0000266"/>
    <property type="project" value="RGD"/>
</dbReference>
<dbReference type="Gene3D" id="6.10.140.340">
    <property type="match status" value="1"/>
</dbReference>
<dbReference type="InterPro" id="IPR031176">
    <property type="entry name" value="ELL/occludin"/>
</dbReference>
<dbReference type="InterPro" id="IPR008253">
    <property type="entry name" value="Marvel"/>
</dbReference>
<dbReference type="InterPro" id="IPR002958">
    <property type="entry name" value="Occludin"/>
</dbReference>
<dbReference type="InterPro" id="IPR010844">
    <property type="entry name" value="Occludin_ELL"/>
</dbReference>
<dbReference type="PANTHER" id="PTHR23288:SF4">
    <property type="entry name" value="OCCLUDIN"/>
    <property type="match status" value="1"/>
</dbReference>
<dbReference type="PANTHER" id="PTHR23288">
    <property type="entry name" value="OCCLUDIN AND RNA POLYMERASE II ELONGATION FACTOR ELL"/>
    <property type="match status" value="1"/>
</dbReference>
<dbReference type="Pfam" id="PF01284">
    <property type="entry name" value="MARVEL"/>
    <property type="match status" value="1"/>
</dbReference>
<dbReference type="Pfam" id="PF07303">
    <property type="entry name" value="Occludin_ELL"/>
    <property type="match status" value="1"/>
</dbReference>
<dbReference type="PIRSF" id="PIRSF005993">
    <property type="entry name" value="Occludin"/>
    <property type="match status" value="1"/>
</dbReference>
<dbReference type="PRINTS" id="PR01258">
    <property type="entry name" value="OCCLUDIN"/>
</dbReference>
<dbReference type="SUPFAM" id="SSF144292">
    <property type="entry name" value="occludin/ELL-like"/>
    <property type="match status" value="1"/>
</dbReference>
<dbReference type="PROSITE" id="PS51225">
    <property type="entry name" value="MARVEL"/>
    <property type="match status" value="1"/>
</dbReference>
<dbReference type="PROSITE" id="PS51980">
    <property type="entry name" value="OCEL"/>
    <property type="match status" value="1"/>
</dbReference>